<sequence length="620" mass="69033">MKPAKQTTASLAFLAMGIVYGDIGTSPLYAFKEVFFSHHPLAINPDNVLGILSLVFWAFVLIVSIKYLLLVTRADQNGEGGILTLSAIAQQSAPKPWQRIAMLLGILATGFFFGEAVITPAMSVLSAVEGIAVAQPDLAPYVLPIAMMIIVALFAVQAMGTERIGRFFAPVMLLWFLVLALLGAHAIWHAPQVLRALNPAYAVHFVLLYGQHTLFILGLVVLSVTGVEALYADMGHFGIKPIRIAWFALVMPSLLLNYFGQGAYLLTLSAPTGSTFFSLAPKAWLWPLILLATFATVIASQAVISGIFSLARQAINYGYLPPMKIAHTSEHSQGQIYVPAANMLLFVAVIFVMLRFRSSANLAAAYGIAVTAIMMISSLLLVLVARYQWQWRWPRVVTIGIVFIGMDSLLLASTSTKLMEGGWLPLLLGCVVFIVMYIWQQQRQRLLEIAGNELSVSAMIQSLEEESFQRAAGTAVYLSRSLNHVPRSLLHNIKYNKTLHERNVLMTFQYEAVPRVHPCRRAEIEQVSASFWQVVIHIGYQEEPDMAQVMHCCGLKGLYLHPNETLFLLSSERLKVQKLGMWHDLKVWFFIQMSKHALRTSERLNIPPDRLIEMGVYREM</sequence>
<evidence type="ECO:0000255" key="1">
    <source>
        <dbReference type="HAMAP-Rule" id="MF_01522"/>
    </source>
</evidence>
<gene>
    <name evidence="1" type="primary">kup</name>
    <name type="ordered locus">VC_A0529</name>
</gene>
<accession>Q9KM59</accession>
<feature type="chain" id="PRO_0000209066" description="Probable potassium transport system protein Kup">
    <location>
        <begin position="1"/>
        <end position="620"/>
    </location>
</feature>
<feature type="transmembrane region" description="Helical" evidence="1">
    <location>
        <begin position="11"/>
        <end position="31"/>
    </location>
</feature>
<feature type="transmembrane region" description="Helical" evidence="1">
    <location>
        <begin position="51"/>
        <end position="71"/>
    </location>
</feature>
<feature type="transmembrane region" description="Helical" evidence="1">
    <location>
        <begin position="100"/>
        <end position="120"/>
    </location>
</feature>
<feature type="transmembrane region" description="Helical" evidence="1">
    <location>
        <begin position="138"/>
        <end position="158"/>
    </location>
</feature>
<feature type="transmembrane region" description="Helical" evidence="1">
    <location>
        <begin position="167"/>
        <end position="187"/>
    </location>
</feature>
<feature type="transmembrane region" description="Helical" evidence="1">
    <location>
        <begin position="202"/>
        <end position="222"/>
    </location>
</feature>
<feature type="transmembrane region" description="Helical" evidence="1">
    <location>
        <begin position="246"/>
        <end position="266"/>
    </location>
</feature>
<feature type="transmembrane region" description="Helical" evidence="1">
    <location>
        <begin position="288"/>
        <end position="308"/>
    </location>
</feature>
<feature type="transmembrane region" description="Helical" evidence="1">
    <location>
        <begin position="334"/>
        <end position="354"/>
    </location>
</feature>
<feature type="transmembrane region" description="Helical" evidence="1">
    <location>
        <begin position="364"/>
        <end position="384"/>
    </location>
</feature>
<feature type="transmembrane region" description="Helical" evidence="1">
    <location>
        <begin position="396"/>
        <end position="416"/>
    </location>
</feature>
<feature type="transmembrane region" description="Helical" evidence="1">
    <location>
        <begin position="418"/>
        <end position="438"/>
    </location>
</feature>
<dbReference type="EMBL" id="AE003853">
    <property type="protein sequence ID" value="AAF96432.1"/>
    <property type="molecule type" value="Genomic_DNA"/>
</dbReference>
<dbReference type="PIR" id="F82449">
    <property type="entry name" value="F82449"/>
</dbReference>
<dbReference type="RefSeq" id="NP_232920.1">
    <property type="nucleotide sequence ID" value="NC_002506.1"/>
</dbReference>
<dbReference type="RefSeq" id="WP_000801198.1">
    <property type="nucleotide sequence ID" value="NZ_LT906615.1"/>
</dbReference>
<dbReference type="STRING" id="243277.VC_A0529"/>
<dbReference type="DNASU" id="2612710"/>
<dbReference type="EnsemblBacteria" id="AAF96432">
    <property type="protein sequence ID" value="AAF96432"/>
    <property type="gene ID" value="VC_A0529"/>
</dbReference>
<dbReference type="KEGG" id="vch:VC_A0529"/>
<dbReference type="PATRIC" id="fig|243277.26.peg.3154"/>
<dbReference type="eggNOG" id="COG3158">
    <property type="taxonomic scope" value="Bacteria"/>
</dbReference>
<dbReference type="HOGENOM" id="CLU_008142_4_2_6"/>
<dbReference type="Proteomes" id="UP000000584">
    <property type="component" value="Chromosome 2"/>
</dbReference>
<dbReference type="GO" id="GO:0016020">
    <property type="term" value="C:membrane"/>
    <property type="evidence" value="ECO:0000318"/>
    <property type="project" value="GO_Central"/>
</dbReference>
<dbReference type="GO" id="GO:0005886">
    <property type="term" value="C:plasma membrane"/>
    <property type="evidence" value="ECO:0007669"/>
    <property type="project" value="UniProtKB-SubCell"/>
</dbReference>
<dbReference type="GO" id="GO:0015079">
    <property type="term" value="F:potassium ion transmembrane transporter activity"/>
    <property type="evidence" value="ECO:0000318"/>
    <property type="project" value="GO_Central"/>
</dbReference>
<dbReference type="GO" id="GO:0015293">
    <property type="term" value="F:symporter activity"/>
    <property type="evidence" value="ECO:0007669"/>
    <property type="project" value="UniProtKB-UniRule"/>
</dbReference>
<dbReference type="GO" id="GO:0006813">
    <property type="term" value="P:potassium ion transport"/>
    <property type="evidence" value="ECO:0000318"/>
    <property type="project" value="GO_Central"/>
</dbReference>
<dbReference type="HAMAP" id="MF_01522">
    <property type="entry name" value="Kup"/>
    <property type="match status" value="1"/>
</dbReference>
<dbReference type="InterPro" id="IPR003855">
    <property type="entry name" value="K+_transporter"/>
</dbReference>
<dbReference type="InterPro" id="IPR053952">
    <property type="entry name" value="K_trans_C"/>
</dbReference>
<dbReference type="InterPro" id="IPR053951">
    <property type="entry name" value="K_trans_N"/>
</dbReference>
<dbReference type="InterPro" id="IPR023051">
    <property type="entry name" value="Kup"/>
</dbReference>
<dbReference type="PANTHER" id="PTHR30540:SF79">
    <property type="entry name" value="LOW AFFINITY POTASSIUM TRANSPORT SYSTEM PROTEIN KUP"/>
    <property type="match status" value="1"/>
</dbReference>
<dbReference type="PANTHER" id="PTHR30540">
    <property type="entry name" value="OSMOTIC STRESS POTASSIUM TRANSPORTER"/>
    <property type="match status" value="1"/>
</dbReference>
<dbReference type="Pfam" id="PF02705">
    <property type="entry name" value="K_trans"/>
    <property type="match status" value="1"/>
</dbReference>
<dbReference type="Pfam" id="PF22776">
    <property type="entry name" value="K_trans_C"/>
    <property type="match status" value="1"/>
</dbReference>
<reference key="1">
    <citation type="journal article" date="2000" name="Nature">
        <title>DNA sequence of both chromosomes of the cholera pathogen Vibrio cholerae.</title>
        <authorList>
            <person name="Heidelberg J.F."/>
            <person name="Eisen J.A."/>
            <person name="Nelson W.C."/>
            <person name="Clayton R.A."/>
            <person name="Gwinn M.L."/>
            <person name="Dodson R.J."/>
            <person name="Haft D.H."/>
            <person name="Hickey E.K."/>
            <person name="Peterson J.D."/>
            <person name="Umayam L.A."/>
            <person name="Gill S.R."/>
            <person name="Nelson K.E."/>
            <person name="Read T.D."/>
            <person name="Tettelin H."/>
            <person name="Richardson D.L."/>
            <person name="Ermolaeva M.D."/>
            <person name="Vamathevan J.J."/>
            <person name="Bass S."/>
            <person name="Qin H."/>
            <person name="Dragoi I."/>
            <person name="Sellers P."/>
            <person name="McDonald L.A."/>
            <person name="Utterback T.R."/>
            <person name="Fleischmann R.D."/>
            <person name="Nierman W.C."/>
            <person name="White O."/>
            <person name="Salzberg S.L."/>
            <person name="Smith H.O."/>
            <person name="Colwell R.R."/>
            <person name="Mekalanos J.J."/>
            <person name="Venter J.C."/>
            <person name="Fraser C.M."/>
        </authorList>
    </citation>
    <scope>NUCLEOTIDE SEQUENCE [LARGE SCALE GENOMIC DNA]</scope>
    <source>
        <strain>ATCC 39315 / El Tor Inaba N16961</strain>
    </source>
</reference>
<protein>
    <recommendedName>
        <fullName evidence="1">Probable potassium transport system protein Kup</fullName>
    </recommendedName>
</protein>
<name>KUP_VIBCH</name>
<organism>
    <name type="scientific">Vibrio cholerae serotype O1 (strain ATCC 39315 / El Tor Inaba N16961)</name>
    <dbReference type="NCBI Taxonomy" id="243277"/>
    <lineage>
        <taxon>Bacteria</taxon>
        <taxon>Pseudomonadati</taxon>
        <taxon>Pseudomonadota</taxon>
        <taxon>Gammaproteobacteria</taxon>
        <taxon>Vibrionales</taxon>
        <taxon>Vibrionaceae</taxon>
        <taxon>Vibrio</taxon>
    </lineage>
</organism>
<keyword id="KW-0997">Cell inner membrane</keyword>
<keyword id="KW-1003">Cell membrane</keyword>
<keyword id="KW-0406">Ion transport</keyword>
<keyword id="KW-0472">Membrane</keyword>
<keyword id="KW-0630">Potassium</keyword>
<keyword id="KW-0633">Potassium transport</keyword>
<keyword id="KW-1185">Reference proteome</keyword>
<keyword id="KW-0769">Symport</keyword>
<keyword id="KW-0812">Transmembrane</keyword>
<keyword id="KW-1133">Transmembrane helix</keyword>
<keyword id="KW-0813">Transport</keyword>
<proteinExistence type="inferred from homology"/>
<comment type="function">
    <text evidence="1">Transport of potassium into the cell. Likely operates as a K(+):H(+) symporter.</text>
</comment>
<comment type="catalytic activity">
    <reaction evidence="1">
        <text>K(+)(in) + H(+)(in) = K(+)(out) + H(+)(out)</text>
        <dbReference type="Rhea" id="RHEA:28490"/>
        <dbReference type="ChEBI" id="CHEBI:15378"/>
        <dbReference type="ChEBI" id="CHEBI:29103"/>
    </reaction>
    <physiologicalReaction direction="right-to-left" evidence="1">
        <dbReference type="Rhea" id="RHEA:28492"/>
    </physiologicalReaction>
</comment>
<comment type="subcellular location">
    <subcellularLocation>
        <location evidence="1">Cell inner membrane</location>
        <topology evidence="1">Multi-pass membrane protein</topology>
    </subcellularLocation>
</comment>
<comment type="similarity">
    <text evidence="1">Belongs to the HAK/KUP transporter (TC 2.A.72) family.</text>
</comment>